<protein>
    <recommendedName>
        <fullName evidence="1">Small ribosomal subunit protein bS18</fullName>
    </recommendedName>
    <alternativeName>
        <fullName evidence="2">30S ribosomal protein S18</fullName>
    </alternativeName>
</protein>
<evidence type="ECO:0000255" key="1">
    <source>
        <dbReference type="HAMAP-Rule" id="MF_00270"/>
    </source>
</evidence>
<evidence type="ECO:0000305" key="2"/>
<organism>
    <name type="scientific">Rhodopseudomonas palustris (strain TIE-1)</name>
    <dbReference type="NCBI Taxonomy" id="395960"/>
    <lineage>
        <taxon>Bacteria</taxon>
        <taxon>Pseudomonadati</taxon>
        <taxon>Pseudomonadota</taxon>
        <taxon>Alphaproteobacteria</taxon>
        <taxon>Hyphomicrobiales</taxon>
        <taxon>Nitrobacteraceae</taxon>
        <taxon>Rhodopseudomonas</taxon>
    </lineage>
</organism>
<proteinExistence type="inferred from homology"/>
<feature type="chain" id="PRO_1000114442" description="Small ribosomal subunit protein bS18">
    <location>
        <begin position="1"/>
        <end position="79"/>
    </location>
</feature>
<gene>
    <name evidence="1" type="primary">rpsR</name>
    <name type="ordered locus">Rpal_3488</name>
</gene>
<sequence>MAEAGARRPFFRRRKTCPFTGANAPKIDYKDSKLLMRYVSERGKIVPSRITAVSAKKQRELARAIKRARFLGLLPYVIR</sequence>
<accession>B3Q9T6</accession>
<keyword id="KW-0687">Ribonucleoprotein</keyword>
<keyword id="KW-0689">Ribosomal protein</keyword>
<keyword id="KW-0694">RNA-binding</keyword>
<keyword id="KW-0699">rRNA-binding</keyword>
<reference key="1">
    <citation type="submission" date="2008-05" db="EMBL/GenBank/DDBJ databases">
        <title>Complete sequence of Rhodopseudomonas palustris TIE-1.</title>
        <authorList>
            <consortium name="US DOE Joint Genome Institute"/>
            <person name="Lucas S."/>
            <person name="Copeland A."/>
            <person name="Lapidus A."/>
            <person name="Glavina del Rio T."/>
            <person name="Dalin E."/>
            <person name="Tice H."/>
            <person name="Pitluck S."/>
            <person name="Chain P."/>
            <person name="Malfatti S."/>
            <person name="Shin M."/>
            <person name="Vergez L."/>
            <person name="Lang D."/>
            <person name="Schmutz J."/>
            <person name="Larimer F."/>
            <person name="Land M."/>
            <person name="Hauser L."/>
            <person name="Kyrpides N."/>
            <person name="Mikhailova N."/>
            <person name="Emerson D."/>
            <person name="Newman D.K."/>
            <person name="Roden E."/>
            <person name="Richardson P."/>
        </authorList>
    </citation>
    <scope>NUCLEOTIDE SEQUENCE [LARGE SCALE GENOMIC DNA]</scope>
    <source>
        <strain>TIE-1</strain>
    </source>
</reference>
<dbReference type="EMBL" id="CP001096">
    <property type="protein sequence ID" value="ACF01989.1"/>
    <property type="molecule type" value="Genomic_DNA"/>
</dbReference>
<dbReference type="RefSeq" id="WP_011158623.1">
    <property type="nucleotide sequence ID" value="NC_011004.1"/>
</dbReference>
<dbReference type="SMR" id="B3Q9T6"/>
<dbReference type="GeneID" id="66894160"/>
<dbReference type="KEGG" id="rpt:Rpal_3488"/>
<dbReference type="HOGENOM" id="CLU_148710_2_3_5"/>
<dbReference type="OrthoDB" id="9812008at2"/>
<dbReference type="Proteomes" id="UP000001725">
    <property type="component" value="Chromosome"/>
</dbReference>
<dbReference type="GO" id="GO:0022627">
    <property type="term" value="C:cytosolic small ribosomal subunit"/>
    <property type="evidence" value="ECO:0007669"/>
    <property type="project" value="TreeGrafter"/>
</dbReference>
<dbReference type="GO" id="GO:0070181">
    <property type="term" value="F:small ribosomal subunit rRNA binding"/>
    <property type="evidence" value="ECO:0007669"/>
    <property type="project" value="TreeGrafter"/>
</dbReference>
<dbReference type="GO" id="GO:0003735">
    <property type="term" value="F:structural constituent of ribosome"/>
    <property type="evidence" value="ECO:0007669"/>
    <property type="project" value="InterPro"/>
</dbReference>
<dbReference type="GO" id="GO:0006412">
    <property type="term" value="P:translation"/>
    <property type="evidence" value="ECO:0007669"/>
    <property type="project" value="UniProtKB-UniRule"/>
</dbReference>
<dbReference type="FunFam" id="4.10.640.10:FF:000006">
    <property type="entry name" value="30S ribosomal protein S18"/>
    <property type="match status" value="1"/>
</dbReference>
<dbReference type="Gene3D" id="4.10.640.10">
    <property type="entry name" value="Ribosomal protein S18"/>
    <property type="match status" value="1"/>
</dbReference>
<dbReference type="HAMAP" id="MF_00270">
    <property type="entry name" value="Ribosomal_bS18"/>
    <property type="match status" value="1"/>
</dbReference>
<dbReference type="InterPro" id="IPR001648">
    <property type="entry name" value="Ribosomal_bS18"/>
</dbReference>
<dbReference type="InterPro" id="IPR018275">
    <property type="entry name" value="Ribosomal_bS18_CS"/>
</dbReference>
<dbReference type="InterPro" id="IPR036870">
    <property type="entry name" value="Ribosomal_bS18_sf"/>
</dbReference>
<dbReference type="NCBIfam" id="TIGR00165">
    <property type="entry name" value="S18"/>
    <property type="match status" value="1"/>
</dbReference>
<dbReference type="PANTHER" id="PTHR13479">
    <property type="entry name" value="30S RIBOSOMAL PROTEIN S18"/>
    <property type="match status" value="1"/>
</dbReference>
<dbReference type="PANTHER" id="PTHR13479:SF40">
    <property type="entry name" value="SMALL RIBOSOMAL SUBUNIT PROTEIN BS18M"/>
    <property type="match status" value="1"/>
</dbReference>
<dbReference type="Pfam" id="PF01084">
    <property type="entry name" value="Ribosomal_S18"/>
    <property type="match status" value="1"/>
</dbReference>
<dbReference type="PRINTS" id="PR00974">
    <property type="entry name" value="RIBOSOMALS18"/>
</dbReference>
<dbReference type="SUPFAM" id="SSF46911">
    <property type="entry name" value="Ribosomal protein S18"/>
    <property type="match status" value="1"/>
</dbReference>
<dbReference type="PROSITE" id="PS00057">
    <property type="entry name" value="RIBOSOMAL_S18"/>
    <property type="match status" value="1"/>
</dbReference>
<comment type="function">
    <text evidence="1">Binds as a heterodimer with protein bS6 to the central domain of the 16S rRNA, where it helps stabilize the platform of the 30S subunit.</text>
</comment>
<comment type="subunit">
    <text evidence="1">Part of the 30S ribosomal subunit. Forms a tight heterodimer with protein bS6.</text>
</comment>
<comment type="similarity">
    <text evidence="1">Belongs to the bacterial ribosomal protein bS18 family.</text>
</comment>
<name>RS18_RHOPT</name>